<keyword id="KW-0002">3D-structure</keyword>
<keyword id="KW-0007">Acetylation</keyword>
<keyword id="KW-0106">Calcium</keyword>
<keyword id="KW-0903">Direct protein sequencing</keyword>
<keyword id="KW-0479">Metal-binding</keyword>
<keyword id="KW-0514">Muscle protein</keyword>
<keyword id="KW-0597">Phosphoprotein</keyword>
<keyword id="KW-1185">Reference proteome</keyword>
<keyword id="KW-0677">Repeat</keyword>
<gene>
    <name type="primary">TNNC1</name>
    <name type="synonym">TNNC</name>
</gene>
<feature type="chain" id="PRO_0000073699" description="Troponin C, slow skeletal and cardiac muscles">
    <location>
        <begin position="1"/>
        <end position="161"/>
    </location>
</feature>
<feature type="domain" description="EF-hand 1" evidence="2">
    <location>
        <begin position="16"/>
        <end position="51"/>
    </location>
</feature>
<feature type="domain" description="EF-hand 2" evidence="2">
    <location>
        <begin position="52"/>
        <end position="87"/>
    </location>
</feature>
<feature type="domain" description="EF-hand 3" evidence="2">
    <location>
        <begin position="92"/>
        <end position="127"/>
    </location>
</feature>
<feature type="domain" description="EF-hand 4" evidence="2">
    <location>
        <begin position="128"/>
        <end position="161"/>
    </location>
</feature>
<feature type="binding site" evidence="2">
    <location>
        <position position="65"/>
    </location>
    <ligand>
        <name>Ca(2+)</name>
        <dbReference type="ChEBI" id="CHEBI:29108"/>
        <label>1</label>
    </ligand>
</feature>
<feature type="binding site" evidence="2">
    <location>
        <position position="67"/>
    </location>
    <ligand>
        <name>Ca(2+)</name>
        <dbReference type="ChEBI" id="CHEBI:29108"/>
        <label>1</label>
    </ligand>
</feature>
<feature type="binding site" evidence="2">
    <location>
        <position position="69"/>
    </location>
    <ligand>
        <name>Ca(2+)</name>
        <dbReference type="ChEBI" id="CHEBI:29108"/>
        <label>1</label>
    </ligand>
</feature>
<feature type="binding site" evidence="2">
    <location>
        <position position="71"/>
    </location>
    <ligand>
        <name>Ca(2+)</name>
        <dbReference type="ChEBI" id="CHEBI:29108"/>
        <label>1</label>
    </ligand>
</feature>
<feature type="binding site" evidence="2">
    <location>
        <position position="76"/>
    </location>
    <ligand>
        <name>Ca(2+)</name>
        <dbReference type="ChEBI" id="CHEBI:29108"/>
        <label>1</label>
    </ligand>
</feature>
<feature type="binding site" evidence="2">
    <location>
        <position position="105"/>
    </location>
    <ligand>
        <name>Ca(2+)</name>
        <dbReference type="ChEBI" id="CHEBI:29108"/>
        <label>2</label>
    </ligand>
</feature>
<feature type="binding site" evidence="2">
    <location>
        <position position="107"/>
    </location>
    <ligand>
        <name>Ca(2+)</name>
        <dbReference type="ChEBI" id="CHEBI:29108"/>
        <label>2</label>
    </ligand>
</feature>
<feature type="binding site" evidence="2">
    <location>
        <position position="109"/>
    </location>
    <ligand>
        <name>Ca(2+)</name>
        <dbReference type="ChEBI" id="CHEBI:29108"/>
        <label>2</label>
    </ligand>
</feature>
<feature type="binding site" evidence="2">
    <location>
        <position position="111"/>
    </location>
    <ligand>
        <name>Ca(2+)</name>
        <dbReference type="ChEBI" id="CHEBI:29108"/>
        <label>2</label>
    </ligand>
</feature>
<feature type="binding site" evidence="2">
    <location>
        <position position="116"/>
    </location>
    <ligand>
        <name>Ca(2+)</name>
        <dbReference type="ChEBI" id="CHEBI:29108"/>
        <label>2</label>
    </ligand>
</feature>
<feature type="binding site" evidence="2">
    <location>
        <position position="141"/>
    </location>
    <ligand>
        <name>Ca(2+)</name>
        <dbReference type="ChEBI" id="CHEBI:29108"/>
        <label>3</label>
    </ligand>
</feature>
<feature type="binding site" evidence="2">
    <location>
        <position position="143"/>
    </location>
    <ligand>
        <name>Ca(2+)</name>
        <dbReference type="ChEBI" id="CHEBI:29108"/>
        <label>3</label>
    </ligand>
</feature>
<feature type="binding site" evidence="2">
    <location>
        <position position="145"/>
    </location>
    <ligand>
        <name>Ca(2+)</name>
        <dbReference type="ChEBI" id="CHEBI:29108"/>
        <label>3</label>
    </ligand>
</feature>
<feature type="binding site" evidence="2">
    <location>
        <position position="147"/>
    </location>
    <ligand>
        <name>Ca(2+)</name>
        <dbReference type="ChEBI" id="CHEBI:29108"/>
        <label>3</label>
    </ligand>
</feature>
<feature type="binding site" evidence="2">
    <location>
        <position position="152"/>
    </location>
    <ligand>
        <name>Ca(2+)</name>
        <dbReference type="ChEBI" id="CHEBI:29108"/>
        <label>3</label>
    </ligand>
</feature>
<feature type="modified residue" description="N-acetylmethionine" evidence="3">
    <location>
        <position position="1"/>
    </location>
</feature>
<feature type="modified residue" description="Phosphoserine" evidence="1">
    <location>
        <position position="98"/>
    </location>
</feature>
<comment type="function">
    <text>Troponin is the central regulatory protein of striated muscle contraction. Tn consists of three components: Tn-I which is the inhibitor of actomyosin ATPase, Tn-T which contains the binding site for tropomyosin and Tn-C. The binding of calcium to Tn-C abolishes the inhibitory action of Tn on actin filaments.</text>
</comment>
<comment type="miscellaneous">
    <text>Cardiac muscle Tn-C can bind 3 calcium ions per molecule. Domain I does not bind calcium.</text>
</comment>
<comment type="similarity">
    <text evidence="4">Belongs to the troponin C family.</text>
</comment>
<dbReference type="EMBL" id="AY958072">
    <property type="protein sequence ID" value="AAY33022.1"/>
    <property type="molecule type" value="Genomic_DNA"/>
</dbReference>
<dbReference type="PIR" id="JU0035">
    <property type="entry name" value="JU0035"/>
</dbReference>
<dbReference type="RefSeq" id="NP_001123715.1">
    <property type="nucleotide sequence ID" value="NM_001130243.1"/>
</dbReference>
<dbReference type="PDB" id="7KO4">
    <property type="method" value="EM"/>
    <property type="resolution" value="8.00 A"/>
    <property type="chains" value="V/c=2-161"/>
</dbReference>
<dbReference type="PDB" id="7KO5">
    <property type="method" value="EM"/>
    <property type="resolution" value="7.80 A"/>
    <property type="chains" value="V/c=2-161"/>
</dbReference>
<dbReference type="PDB" id="7KO7">
    <property type="method" value="EM"/>
    <property type="resolution" value="8.30 A"/>
    <property type="chains" value="V/c=2-161"/>
</dbReference>
<dbReference type="PDB" id="7KON">
    <property type="method" value="EM"/>
    <property type="resolution" value="8.10 A"/>
    <property type="chains" value="V/c=2-161"/>
</dbReference>
<dbReference type="PDB" id="7KOR">
    <property type="method" value="EM"/>
    <property type="resolution" value="7.80 A"/>
    <property type="chains" value="V/c=2-161"/>
</dbReference>
<dbReference type="PDB" id="8UWW">
    <property type="method" value="EM"/>
    <property type="resolution" value="5.10 A"/>
    <property type="chains" value="C=1-161"/>
</dbReference>
<dbReference type="PDB" id="8UWX">
    <property type="method" value="EM"/>
    <property type="resolution" value="6.00 A"/>
    <property type="chains" value="C=1-161"/>
</dbReference>
<dbReference type="PDB" id="8UWY">
    <property type="method" value="EM"/>
    <property type="resolution" value="5.50 A"/>
    <property type="chains" value="C=1-161"/>
</dbReference>
<dbReference type="PDB" id="8UYD">
    <property type="method" value="EM"/>
    <property type="resolution" value="5.30 A"/>
    <property type="chains" value="C=1-161"/>
</dbReference>
<dbReference type="PDB" id="8UZ5">
    <property type="method" value="EM"/>
    <property type="resolution" value="5.90 A"/>
    <property type="chains" value="C=1-161"/>
</dbReference>
<dbReference type="PDB" id="8UZ6">
    <property type="method" value="EM"/>
    <property type="resolution" value="7.10 A"/>
    <property type="chains" value="C=1-161"/>
</dbReference>
<dbReference type="PDB" id="8UZX">
    <property type="method" value="EM"/>
    <property type="resolution" value="5.40 A"/>
    <property type="chains" value="C=1-161"/>
</dbReference>
<dbReference type="PDB" id="8UZY">
    <property type="method" value="EM"/>
    <property type="resolution" value="5.30 A"/>
    <property type="chains" value="C=1-161"/>
</dbReference>
<dbReference type="PDB" id="8V01">
    <property type="method" value="EM"/>
    <property type="resolution" value="5.50 A"/>
    <property type="chains" value="C=1-161"/>
</dbReference>
<dbReference type="PDB" id="8V0I">
    <property type="method" value="EM"/>
    <property type="resolution" value="5.80 A"/>
    <property type="chains" value="C=1-161"/>
</dbReference>
<dbReference type="PDB" id="8V0K">
    <property type="method" value="EM"/>
    <property type="resolution" value="5.20 A"/>
    <property type="chains" value="C=1-161"/>
</dbReference>
<dbReference type="PDB" id="8V0Y">
    <property type="method" value="EM"/>
    <property type="resolution" value="7.00 A"/>
    <property type="chains" value="C=1-161"/>
</dbReference>
<dbReference type="PDBsum" id="7KO4"/>
<dbReference type="PDBsum" id="7KO5"/>
<dbReference type="PDBsum" id="7KO7"/>
<dbReference type="PDBsum" id="7KON"/>
<dbReference type="PDBsum" id="7KOR"/>
<dbReference type="PDBsum" id="8UWW"/>
<dbReference type="PDBsum" id="8UWX"/>
<dbReference type="PDBsum" id="8UWY"/>
<dbReference type="PDBsum" id="8UYD"/>
<dbReference type="PDBsum" id="8UZ5"/>
<dbReference type="PDBsum" id="8UZ6"/>
<dbReference type="PDBsum" id="8UZX"/>
<dbReference type="PDBsum" id="8UZY"/>
<dbReference type="PDBsum" id="8V01"/>
<dbReference type="PDBsum" id="8V0I"/>
<dbReference type="PDBsum" id="8V0K"/>
<dbReference type="PDBsum" id="8V0Y"/>
<dbReference type="BMRB" id="P63317"/>
<dbReference type="EMDB" id="EMD-22964"/>
<dbReference type="EMDB" id="EMD-22965"/>
<dbReference type="EMDB" id="EMD-22966"/>
<dbReference type="EMDB" id="EMD-22978"/>
<dbReference type="EMDB" id="EMD-22981"/>
<dbReference type="EMDB" id="EMD-42681"/>
<dbReference type="EMDB" id="EMD-42682"/>
<dbReference type="EMDB" id="EMD-42683"/>
<dbReference type="EMDB" id="EMD-42800"/>
<dbReference type="EMDB" id="EMD-42833"/>
<dbReference type="EMDB" id="EMD-42835"/>
<dbReference type="EMDB" id="EMD-42846"/>
<dbReference type="EMDB" id="EMD-42847"/>
<dbReference type="EMDB" id="EMD-42849"/>
<dbReference type="EMDB" id="EMD-42856"/>
<dbReference type="EMDB" id="EMD-42858"/>
<dbReference type="EMDB" id="EMD-42874"/>
<dbReference type="SMR" id="P63317"/>
<dbReference type="FunCoup" id="P63317">
    <property type="interactions" value="494"/>
</dbReference>
<dbReference type="STRING" id="9823.ENSSSCP00000043815"/>
<dbReference type="iPTMnet" id="P63317"/>
<dbReference type="PaxDb" id="9823-ENSSSCP00000012193"/>
<dbReference type="PeptideAtlas" id="P63317"/>
<dbReference type="Ensembl" id="ENSSSCT00000012521.4">
    <property type="protein sequence ID" value="ENSSSCP00000012193.2"/>
    <property type="gene ID" value="ENSSSCG00000011441.5"/>
</dbReference>
<dbReference type="Ensembl" id="ENSSSCT00015107220.1">
    <property type="protein sequence ID" value="ENSSSCP00015045257.1"/>
    <property type="gene ID" value="ENSSSCG00015079078.1"/>
</dbReference>
<dbReference type="Ensembl" id="ENSSSCT00025021119.1">
    <property type="protein sequence ID" value="ENSSSCP00025008685.1"/>
    <property type="gene ID" value="ENSSSCG00025015750.1"/>
</dbReference>
<dbReference type="Ensembl" id="ENSSSCT00030102516.1">
    <property type="protein sequence ID" value="ENSSSCP00030047293.1"/>
    <property type="gene ID" value="ENSSSCG00030073168.1"/>
</dbReference>
<dbReference type="Ensembl" id="ENSSSCT00035098214.1">
    <property type="protein sequence ID" value="ENSSSCP00035041468.1"/>
    <property type="gene ID" value="ENSSSCG00035072554.1"/>
</dbReference>
<dbReference type="Ensembl" id="ENSSSCT00040051401.1">
    <property type="protein sequence ID" value="ENSSSCP00040021332.1"/>
    <property type="gene ID" value="ENSSSCG00040038293.1"/>
</dbReference>
<dbReference type="Ensembl" id="ENSSSCT00045025066.1">
    <property type="protein sequence ID" value="ENSSSCP00045017315.1"/>
    <property type="gene ID" value="ENSSSCG00045014719.1"/>
</dbReference>
<dbReference type="Ensembl" id="ENSSSCT00050103559.1">
    <property type="protein sequence ID" value="ENSSSCP00050045315.1"/>
    <property type="gene ID" value="ENSSSCG00050075504.1"/>
</dbReference>
<dbReference type="Ensembl" id="ENSSSCT00055034141.1">
    <property type="protein sequence ID" value="ENSSSCP00055027124.1"/>
    <property type="gene ID" value="ENSSSCG00055017398.1"/>
</dbReference>
<dbReference type="Ensembl" id="ENSSSCT00060039098.1">
    <property type="protein sequence ID" value="ENSSSCP00060016589.1"/>
    <property type="gene ID" value="ENSSSCG00060028932.1"/>
</dbReference>
<dbReference type="Ensembl" id="ENSSSCT00065047256.1">
    <property type="protein sequence ID" value="ENSSSCP00065020331.1"/>
    <property type="gene ID" value="ENSSSCG00065034718.1"/>
</dbReference>
<dbReference type="Ensembl" id="ENSSSCT00070051140.1">
    <property type="protein sequence ID" value="ENSSSCP00070043256.1"/>
    <property type="gene ID" value="ENSSSCG00070025573.1"/>
</dbReference>
<dbReference type="Ensembl" id="ENSSSCT00105070859">
    <property type="protein sequence ID" value="ENSSSCP00105050165"/>
    <property type="gene ID" value="ENSSSCG00105037162"/>
</dbReference>
<dbReference type="Ensembl" id="ENSSSCT00110050743">
    <property type="protein sequence ID" value="ENSSSCP00110035539"/>
    <property type="gene ID" value="ENSSSCG00110026392"/>
</dbReference>
<dbReference type="Ensembl" id="ENSSSCT00115031501">
    <property type="protein sequence ID" value="ENSSSCP00115029952"/>
    <property type="gene ID" value="ENSSSCG00115017793"/>
</dbReference>
<dbReference type="Ensembl" id="ENSSSCT00130062132">
    <property type="protein sequence ID" value="ENSSSCP00130044493"/>
    <property type="gene ID" value="ENSSSCG00130031846"/>
</dbReference>
<dbReference type="GeneID" id="100156435"/>
<dbReference type="KEGG" id="ssc:100156435"/>
<dbReference type="CTD" id="7134"/>
<dbReference type="VGNC" id="VGNC:94282">
    <property type="gene designation" value="TNNC1"/>
</dbReference>
<dbReference type="eggNOG" id="KOG0027">
    <property type="taxonomic scope" value="Eukaryota"/>
</dbReference>
<dbReference type="GeneTree" id="ENSGT00940000153541"/>
<dbReference type="HOGENOM" id="CLU_061288_2_5_1"/>
<dbReference type="InParanoid" id="P63317"/>
<dbReference type="OMA" id="QKSEFRA"/>
<dbReference type="OrthoDB" id="26525at2759"/>
<dbReference type="TreeFam" id="TF318191"/>
<dbReference type="Reactome" id="R-SSC-390522">
    <property type="pathway name" value="Striated Muscle Contraction"/>
</dbReference>
<dbReference type="Proteomes" id="UP000008227">
    <property type="component" value="Chromosome 13"/>
</dbReference>
<dbReference type="Proteomes" id="UP000314985">
    <property type="component" value="Chromosome 13"/>
</dbReference>
<dbReference type="Proteomes" id="UP000694570">
    <property type="component" value="Unplaced"/>
</dbReference>
<dbReference type="Proteomes" id="UP000694571">
    <property type="component" value="Unplaced"/>
</dbReference>
<dbReference type="Proteomes" id="UP000694720">
    <property type="component" value="Unplaced"/>
</dbReference>
<dbReference type="Proteomes" id="UP000694722">
    <property type="component" value="Unplaced"/>
</dbReference>
<dbReference type="Proteomes" id="UP000694723">
    <property type="component" value="Unplaced"/>
</dbReference>
<dbReference type="Proteomes" id="UP000694724">
    <property type="component" value="Unplaced"/>
</dbReference>
<dbReference type="Proteomes" id="UP000694725">
    <property type="component" value="Unplaced"/>
</dbReference>
<dbReference type="Proteomes" id="UP000694726">
    <property type="component" value="Unplaced"/>
</dbReference>
<dbReference type="Proteomes" id="UP000694727">
    <property type="component" value="Unplaced"/>
</dbReference>
<dbReference type="Proteomes" id="UP000694728">
    <property type="component" value="Unplaced"/>
</dbReference>
<dbReference type="Bgee" id="ENSSSCG00000011441">
    <property type="expression patterns" value="Expressed in heart left ventricle and 33 other cell types or tissues"/>
</dbReference>
<dbReference type="ExpressionAtlas" id="P63317">
    <property type="expression patterns" value="baseline and differential"/>
</dbReference>
<dbReference type="GO" id="GO:1990584">
    <property type="term" value="C:cardiac Troponin complex"/>
    <property type="evidence" value="ECO:0000318"/>
    <property type="project" value="GO_Central"/>
</dbReference>
<dbReference type="GO" id="GO:0051015">
    <property type="term" value="F:actin filament binding"/>
    <property type="evidence" value="ECO:0007669"/>
    <property type="project" value="Ensembl"/>
</dbReference>
<dbReference type="GO" id="GO:0005509">
    <property type="term" value="F:calcium ion binding"/>
    <property type="evidence" value="ECO:0000250"/>
    <property type="project" value="AgBase"/>
</dbReference>
<dbReference type="GO" id="GO:0048306">
    <property type="term" value="F:calcium-dependent protein binding"/>
    <property type="evidence" value="ECO:0000318"/>
    <property type="project" value="GO_Central"/>
</dbReference>
<dbReference type="GO" id="GO:0042803">
    <property type="term" value="F:protein homodimerization activity"/>
    <property type="evidence" value="ECO:0007669"/>
    <property type="project" value="Ensembl"/>
</dbReference>
<dbReference type="GO" id="GO:0031013">
    <property type="term" value="F:troponin I binding"/>
    <property type="evidence" value="ECO:0000318"/>
    <property type="project" value="GO_Central"/>
</dbReference>
<dbReference type="GO" id="GO:0031014">
    <property type="term" value="F:troponin T binding"/>
    <property type="evidence" value="ECO:0007669"/>
    <property type="project" value="Ensembl"/>
</dbReference>
<dbReference type="GO" id="GO:0060048">
    <property type="term" value="P:cardiac muscle contraction"/>
    <property type="evidence" value="ECO:0000318"/>
    <property type="project" value="GO_Central"/>
</dbReference>
<dbReference type="GO" id="GO:0032972">
    <property type="term" value="P:regulation of muscle filament sliding speed"/>
    <property type="evidence" value="ECO:0007669"/>
    <property type="project" value="Ensembl"/>
</dbReference>
<dbReference type="GO" id="GO:0003009">
    <property type="term" value="P:skeletal muscle contraction"/>
    <property type="evidence" value="ECO:0000318"/>
    <property type="project" value="GO_Central"/>
</dbReference>
<dbReference type="GO" id="GO:0014883">
    <property type="term" value="P:transition between fast and slow fiber"/>
    <property type="evidence" value="ECO:0007669"/>
    <property type="project" value="Ensembl"/>
</dbReference>
<dbReference type="GO" id="GO:0055010">
    <property type="term" value="P:ventricular cardiac muscle tissue morphogenesis"/>
    <property type="evidence" value="ECO:0007669"/>
    <property type="project" value="Ensembl"/>
</dbReference>
<dbReference type="CDD" id="cd00051">
    <property type="entry name" value="EFh"/>
    <property type="match status" value="2"/>
</dbReference>
<dbReference type="FunFam" id="1.10.238.10:FF:000033">
    <property type="entry name" value="Troponin C, slow skeletal and cardiac muscles"/>
    <property type="match status" value="1"/>
</dbReference>
<dbReference type="Gene3D" id="1.10.238.10">
    <property type="entry name" value="EF-hand"/>
    <property type="match status" value="2"/>
</dbReference>
<dbReference type="InterPro" id="IPR050230">
    <property type="entry name" value="CALM/Myosin/TropC-like"/>
</dbReference>
<dbReference type="InterPro" id="IPR011992">
    <property type="entry name" value="EF-hand-dom_pair"/>
</dbReference>
<dbReference type="InterPro" id="IPR018247">
    <property type="entry name" value="EF_Hand_1_Ca_BS"/>
</dbReference>
<dbReference type="InterPro" id="IPR002048">
    <property type="entry name" value="EF_hand_dom"/>
</dbReference>
<dbReference type="PANTHER" id="PTHR23048">
    <property type="entry name" value="MYOSIN LIGHT CHAIN 1, 3"/>
    <property type="match status" value="1"/>
</dbReference>
<dbReference type="PANTHER" id="PTHR23048:SF47">
    <property type="entry name" value="TROPONIN C1, SLOW SKELETAL AND CARDIAC TYPE"/>
    <property type="match status" value="1"/>
</dbReference>
<dbReference type="Pfam" id="PF13499">
    <property type="entry name" value="EF-hand_7"/>
    <property type="match status" value="1"/>
</dbReference>
<dbReference type="Pfam" id="PF13833">
    <property type="entry name" value="EF-hand_8"/>
    <property type="match status" value="1"/>
</dbReference>
<dbReference type="PRINTS" id="PR00450">
    <property type="entry name" value="RECOVERIN"/>
</dbReference>
<dbReference type="SMART" id="SM00054">
    <property type="entry name" value="EFh"/>
    <property type="match status" value="4"/>
</dbReference>
<dbReference type="SUPFAM" id="SSF47473">
    <property type="entry name" value="EF-hand"/>
    <property type="match status" value="1"/>
</dbReference>
<dbReference type="PROSITE" id="PS00018">
    <property type="entry name" value="EF_HAND_1"/>
    <property type="match status" value="3"/>
</dbReference>
<dbReference type="PROSITE" id="PS50222">
    <property type="entry name" value="EF_HAND_2"/>
    <property type="match status" value="4"/>
</dbReference>
<protein>
    <recommendedName>
        <fullName>Troponin C, slow skeletal and cardiac muscles</fullName>
        <shortName>TN-C</shortName>
    </recommendedName>
</protein>
<evidence type="ECO:0000250" key="1">
    <source>
        <dbReference type="UniProtKB" id="P19123"/>
    </source>
</evidence>
<evidence type="ECO:0000255" key="2">
    <source>
        <dbReference type="PROSITE-ProRule" id="PRU00448"/>
    </source>
</evidence>
<evidence type="ECO:0000269" key="3">
    <source>
    </source>
</evidence>
<evidence type="ECO:0000305" key="4"/>
<accession>P63317</accession>
<accession>O14800</accession>
<accession>P02590</accession>
<accession>P04463</accession>
<accession>Q4G1M5</accession>
<reference key="1">
    <citation type="journal article" date="1989" name="J. Biochem.">
        <title>Amino acid sequence of porcine cardiac muscle troponin C.</title>
        <authorList>
            <person name="Kobayashi T."/>
            <person name="Takagi T."/>
            <person name="Konishi K."/>
            <person name="Morimoto S."/>
            <person name="Ohtsuki I."/>
        </authorList>
    </citation>
    <scope>PROTEIN SEQUENCE</scope>
    <scope>ACETYLATION AT MET-1</scope>
    <source>
        <tissue>Heart muscle</tissue>
    </source>
</reference>
<reference key="2">
    <citation type="submission" date="2005-03" db="EMBL/GenBank/DDBJ databases">
        <title>Cloning and identification of a new gene TNNC1 in pigs.</title>
        <authorList>
            <person name="Cheng H.C."/>
            <person name="Deng C.Y."/>
            <person name="Wang J."/>
        </authorList>
    </citation>
    <scope>NUCLEOTIDE SEQUENCE [GENOMIC DNA]</scope>
</reference>
<proteinExistence type="evidence at protein level"/>
<name>TNNC1_PIG</name>
<organism>
    <name type="scientific">Sus scrofa</name>
    <name type="common">Pig</name>
    <dbReference type="NCBI Taxonomy" id="9823"/>
    <lineage>
        <taxon>Eukaryota</taxon>
        <taxon>Metazoa</taxon>
        <taxon>Chordata</taxon>
        <taxon>Craniata</taxon>
        <taxon>Vertebrata</taxon>
        <taxon>Euteleostomi</taxon>
        <taxon>Mammalia</taxon>
        <taxon>Eutheria</taxon>
        <taxon>Laurasiatheria</taxon>
        <taxon>Artiodactyla</taxon>
        <taxon>Suina</taxon>
        <taxon>Suidae</taxon>
        <taxon>Sus</taxon>
    </lineage>
</organism>
<sequence length="161" mass="18417">MDDIYKAAVEQLTEEQKNEFKAAFDIFVLGAEDGCISTKELGKVMRMLGQNPTPEELQEMIDEVDEDGSGTVDFDEFLVMMVRCMKDDSKGKSEEELSDLFRMFDKNADGYIDLEELKIMLQATGETITEDDIEELMKDGDKNNDGRIDYDEFLEFMKGVE</sequence>